<evidence type="ECO:0000250" key="1">
    <source>
        <dbReference type="UniProtKB" id="Q96MU7"/>
    </source>
</evidence>
<evidence type="ECO:0000250" key="2">
    <source>
        <dbReference type="UniProtKB" id="Q9Y5A9"/>
    </source>
</evidence>
<evidence type="ECO:0000255" key="3">
    <source>
        <dbReference type="PROSITE-ProRule" id="PRU00225"/>
    </source>
</evidence>
<evidence type="ECO:0000256" key="4">
    <source>
        <dbReference type="SAM" id="MobiDB-lite"/>
    </source>
</evidence>
<evidence type="ECO:0000269" key="5">
    <source>
    </source>
</evidence>
<evidence type="ECO:0000269" key="6">
    <source>
    </source>
</evidence>
<evidence type="ECO:0000269" key="7">
    <source>
    </source>
</evidence>
<evidence type="ECO:0000303" key="8">
    <source>
    </source>
</evidence>
<evidence type="ECO:0000303" key="9">
    <source>
    </source>
</evidence>
<evidence type="ECO:0000305" key="10"/>
<evidence type="ECO:0000312" key="11">
    <source>
        <dbReference type="FlyBase" id="FBgn0027616"/>
    </source>
</evidence>
<comment type="function">
    <text evidence="5 6 7">Regulator of alternative splicing that specifically recognizes and binds N6-methyladenosine (m6A)-containing RNAs (PubMed:27919077, PubMed:27919081, PubMed:28675155). Acts by acting as a reader of m6A methylation (PubMed:27919077, PubMed:27919081). Required for sex determination and dosage compensation via Sxl alternative splicing: m6A methylation acts as a key regulator of Sxl pre-mRNA and promotes female-specific alternative splicing of Sxl, which determines female physiognomy (PubMed:27919077, PubMed:27919081, PubMed:28675155). M6A methylation is also required for neuronal functions (PubMed:27919077).</text>
</comment>
<comment type="subcellular location">
    <subcellularLocation>
        <location evidence="5 6 7">Nucleus</location>
    </subcellularLocation>
</comment>
<comment type="alternative products">
    <event type="alternative splicing"/>
    <isoform>
        <id>Q9VZQ1-1</id>
        <name>A</name>
        <sequence type="displayed"/>
    </isoform>
    <isoform>
        <id>Q9VZQ1-2</id>
        <name>B</name>
        <sequence type="described" ref="VSP_059632"/>
    </isoform>
</comment>
<comment type="disruption phenotype">
    <text evidence="5 6 7">Mutant flies survive until adulthood but exhibit flight defects and poor locomotion (PubMed:27919077, PubMed:27919081, PubMed:28675155). Flies display sexual transformations dues to Sxl splicing defects (PubMed:27919081, PubMed:28675155).</text>
</comment>
<comment type="sequence caution" evidence="10">
    <conflict type="miscellaneous discrepancy">
        <sequence resource="EMBL-CDS" id="AAN71205"/>
    </conflict>
    <text>Contaminating sequence.</text>
</comment>
<organism>
    <name type="scientific">Drosophila melanogaster</name>
    <name type="common">Fruit fly</name>
    <dbReference type="NCBI Taxonomy" id="7227"/>
    <lineage>
        <taxon>Eukaryota</taxon>
        <taxon>Metazoa</taxon>
        <taxon>Ecdysozoa</taxon>
        <taxon>Arthropoda</taxon>
        <taxon>Hexapoda</taxon>
        <taxon>Insecta</taxon>
        <taxon>Pterygota</taxon>
        <taxon>Neoptera</taxon>
        <taxon>Endopterygota</taxon>
        <taxon>Diptera</taxon>
        <taxon>Brachycera</taxon>
        <taxon>Muscomorpha</taxon>
        <taxon>Ephydroidea</taxon>
        <taxon>Drosophilidae</taxon>
        <taxon>Drosophila</taxon>
        <taxon>Sophophora</taxon>
    </lineage>
</organism>
<feature type="chain" id="PRO_0000444615" description="YTH domain-containing protein 1">
    <location>
        <begin position="1"/>
        <end position="721"/>
    </location>
</feature>
<feature type="domain" description="YTH" evidence="3">
    <location>
        <begin position="254"/>
        <end position="391"/>
    </location>
</feature>
<feature type="region of interest" description="Disordered" evidence="4">
    <location>
        <begin position="29"/>
        <end position="239"/>
    </location>
</feature>
<feature type="region of interest" description="Disordered" evidence="4">
    <location>
        <begin position="424"/>
        <end position="471"/>
    </location>
</feature>
<feature type="region of interest" description="Disordered" evidence="4">
    <location>
        <begin position="580"/>
        <end position="605"/>
    </location>
</feature>
<feature type="region of interest" description="Disordered" evidence="4">
    <location>
        <begin position="651"/>
        <end position="721"/>
    </location>
</feature>
<feature type="compositionally biased region" description="Acidic residues" evidence="4">
    <location>
        <begin position="29"/>
        <end position="38"/>
    </location>
</feature>
<feature type="compositionally biased region" description="Low complexity" evidence="4">
    <location>
        <begin position="48"/>
        <end position="75"/>
    </location>
</feature>
<feature type="compositionally biased region" description="Basic and acidic residues" evidence="4">
    <location>
        <begin position="135"/>
        <end position="151"/>
    </location>
</feature>
<feature type="compositionally biased region" description="Gly residues" evidence="4">
    <location>
        <begin position="432"/>
        <end position="443"/>
    </location>
</feature>
<feature type="compositionally biased region" description="Basic residues" evidence="4">
    <location>
        <begin position="451"/>
        <end position="471"/>
    </location>
</feature>
<feature type="compositionally biased region" description="Pro residues" evidence="4">
    <location>
        <begin position="583"/>
        <end position="600"/>
    </location>
</feature>
<feature type="compositionally biased region" description="Gly residues" evidence="4">
    <location>
        <begin position="651"/>
        <end position="670"/>
    </location>
</feature>
<feature type="compositionally biased region" description="Basic and acidic residues" evidence="4">
    <location>
        <begin position="699"/>
        <end position="708"/>
    </location>
</feature>
<feature type="binding site" evidence="2">
    <location>
        <begin position="260"/>
        <end position="262"/>
    </location>
    <ligand>
        <name>RNA</name>
        <dbReference type="ChEBI" id="CHEBI:33697"/>
    </ligand>
    <ligandPart>
        <name>N(6)-methyladenosine 5'-phosphate residue</name>
        <dbReference type="ChEBI" id="CHEBI:74449"/>
    </ligandPart>
</feature>
<feature type="binding site" evidence="1">
    <location>
        <position position="276"/>
    </location>
    <ligand>
        <name>RNA</name>
        <dbReference type="ChEBI" id="CHEBI:33697"/>
    </ligand>
    <ligandPart>
        <name>N(6)-methyladenosine 5'-phosphate residue</name>
        <dbReference type="ChEBI" id="CHEBI:74449"/>
    </ligandPart>
</feature>
<feature type="binding site" evidence="1">
    <location>
        <position position="327"/>
    </location>
    <ligand>
        <name>RNA</name>
        <dbReference type="ChEBI" id="CHEBI:33697"/>
    </ligand>
    <ligandPart>
        <name>N(6)-methyladenosine 5'-phosphate residue</name>
        <dbReference type="ChEBI" id="CHEBI:74449"/>
    </ligandPart>
</feature>
<feature type="splice variant" id="VSP_059632" description="In isoform B.">
    <location>
        <begin position="1"/>
        <end position="11"/>
    </location>
</feature>
<feature type="sequence conflict" description="In Ref. 3; AAD38569 and 4; AAN71205." evidence="10" ref="3 4">
    <original>S</original>
    <variation>G</variation>
    <location>
        <position position="637"/>
    </location>
</feature>
<feature type="sequence conflict" description="In Ref. 3; AAD38569." evidence="10" ref="3">
    <original>Q</original>
    <variation>R</variation>
    <location>
        <position position="647"/>
    </location>
</feature>
<protein>
    <recommendedName>
        <fullName evidence="10">YTH domain-containing protein 1</fullName>
    </recommendedName>
    <alternativeName>
        <fullName evidence="8 9">Splicing factor YT521</fullName>
        <shortName evidence="8 9">YT521-B</shortName>
    </alternativeName>
</protein>
<sequence length="721" mass="76259">MPRAARKQTLPMREMADLDAVHLGLDENEADIAEELQDFEFNTRSEASESNGGDSSDSEPSISSVSTATSSLAGSSKRKTKKPAKQSPQPAVETKSSKSSAKNKAKREPTPEELNGGKKKKRTDSGTKKTTSSEASDKVKSKSPDTEDRQPSAKKSRTKIPSNANDSAGHKSDLSEAEDEKPSLPTLESDSESSDSDSGTQHKRNGGNGGGNGRGKPSSKSSTPEKDSVGGGTHSHSQKGYDYMTKLNYLFRDTRFFLIKSNNSDNVQLSKNKSVWATLPQNDANLNQAFKEARNVLLIFSVNESGKFAGFARMAAPSRRDIPQVAWVLPPSISPKALGGVIELDWICRKELSFNATLHLHNTWNEGKPVKIGRDGQEIEPKIGGELCRLFPEDEQIELTPILKKSKETARVMREKGIHVIYKPPRSLSSRGHGGGGRGGGRGSNHDHLGPMRHKRSYHGAPHHRPYRHHHGMGLPPGGGFKRSGSPYRQMGGAAGAPPGGPGDMAMPSWERYMSSAAAAEAYVADYMRNMHGQLPPLPFVPPFAQLPIPGAGAGAAGALPPGAAAAMYEQLPPPVRYYDGPGAPPLPDYPPPQRPPPPGFDKAPSYEEFAAWKNAGLPTVPPPGFPVYGGAANGGSNGAGGLAAAQAAAAGGGMGAGGGSGGGMGGPGGYRNRDGNNGSAGGRRREYGNRSGGGGSSRDSRPFRERGGGGGQRSYRDNRR</sequence>
<reference key="1">
    <citation type="journal article" date="2000" name="Science">
        <title>The genome sequence of Drosophila melanogaster.</title>
        <authorList>
            <person name="Adams M.D."/>
            <person name="Celniker S.E."/>
            <person name="Holt R.A."/>
            <person name="Evans C.A."/>
            <person name="Gocayne J.D."/>
            <person name="Amanatides P.G."/>
            <person name="Scherer S.E."/>
            <person name="Li P.W."/>
            <person name="Hoskins R.A."/>
            <person name="Galle R.F."/>
            <person name="George R.A."/>
            <person name="Lewis S.E."/>
            <person name="Richards S."/>
            <person name="Ashburner M."/>
            <person name="Henderson S.N."/>
            <person name="Sutton G.G."/>
            <person name="Wortman J.R."/>
            <person name="Yandell M.D."/>
            <person name="Zhang Q."/>
            <person name="Chen L.X."/>
            <person name="Brandon R.C."/>
            <person name="Rogers Y.-H.C."/>
            <person name="Blazej R.G."/>
            <person name="Champe M."/>
            <person name="Pfeiffer B.D."/>
            <person name="Wan K.H."/>
            <person name="Doyle C."/>
            <person name="Baxter E.G."/>
            <person name="Helt G."/>
            <person name="Nelson C.R."/>
            <person name="Miklos G.L.G."/>
            <person name="Abril J.F."/>
            <person name="Agbayani A."/>
            <person name="An H.-J."/>
            <person name="Andrews-Pfannkoch C."/>
            <person name="Baldwin D."/>
            <person name="Ballew R.M."/>
            <person name="Basu A."/>
            <person name="Baxendale J."/>
            <person name="Bayraktaroglu L."/>
            <person name="Beasley E.M."/>
            <person name="Beeson K.Y."/>
            <person name="Benos P.V."/>
            <person name="Berman B.P."/>
            <person name="Bhandari D."/>
            <person name="Bolshakov S."/>
            <person name="Borkova D."/>
            <person name="Botchan M.R."/>
            <person name="Bouck J."/>
            <person name="Brokstein P."/>
            <person name="Brottier P."/>
            <person name="Burtis K.C."/>
            <person name="Busam D.A."/>
            <person name="Butler H."/>
            <person name="Cadieu E."/>
            <person name="Center A."/>
            <person name="Chandra I."/>
            <person name="Cherry J.M."/>
            <person name="Cawley S."/>
            <person name="Dahlke C."/>
            <person name="Davenport L.B."/>
            <person name="Davies P."/>
            <person name="de Pablos B."/>
            <person name="Delcher A."/>
            <person name="Deng Z."/>
            <person name="Mays A.D."/>
            <person name="Dew I."/>
            <person name="Dietz S.M."/>
            <person name="Dodson K."/>
            <person name="Doup L.E."/>
            <person name="Downes M."/>
            <person name="Dugan-Rocha S."/>
            <person name="Dunkov B.C."/>
            <person name="Dunn P."/>
            <person name="Durbin K.J."/>
            <person name="Evangelista C.C."/>
            <person name="Ferraz C."/>
            <person name="Ferriera S."/>
            <person name="Fleischmann W."/>
            <person name="Fosler C."/>
            <person name="Gabrielian A.E."/>
            <person name="Garg N.S."/>
            <person name="Gelbart W.M."/>
            <person name="Glasser K."/>
            <person name="Glodek A."/>
            <person name="Gong F."/>
            <person name="Gorrell J.H."/>
            <person name="Gu Z."/>
            <person name="Guan P."/>
            <person name="Harris M."/>
            <person name="Harris N.L."/>
            <person name="Harvey D.A."/>
            <person name="Heiman T.J."/>
            <person name="Hernandez J.R."/>
            <person name="Houck J."/>
            <person name="Hostin D."/>
            <person name="Houston K.A."/>
            <person name="Howland T.J."/>
            <person name="Wei M.-H."/>
            <person name="Ibegwam C."/>
            <person name="Jalali M."/>
            <person name="Kalush F."/>
            <person name="Karpen G.H."/>
            <person name="Ke Z."/>
            <person name="Kennison J.A."/>
            <person name="Ketchum K.A."/>
            <person name="Kimmel B.E."/>
            <person name="Kodira C.D."/>
            <person name="Kraft C.L."/>
            <person name="Kravitz S."/>
            <person name="Kulp D."/>
            <person name="Lai Z."/>
            <person name="Lasko P."/>
            <person name="Lei Y."/>
            <person name="Levitsky A.A."/>
            <person name="Li J.H."/>
            <person name="Li Z."/>
            <person name="Liang Y."/>
            <person name="Lin X."/>
            <person name="Liu X."/>
            <person name="Mattei B."/>
            <person name="McIntosh T.C."/>
            <person name="McLeod M.P."/>
            <person name="McPherson D."/>
            <person name="Merkulov G."/>
            <person name="Milshina N.V."/>
            <person name="Mobarry C."/>
            <person name="Morris J."/>
            <person name="Moshrefi A."/>
            <person name="Mount S.M."/>
            <person name="Moy M."/>
            <person name="Murphy B."/>
            <person name="Murphy L."/>
            <person name="Muzny D.M."/>
            <person name="Nelson D.L."/>
            <person name="Nelson D.R."/>
            <person name="Nelson K.A."/>
            <person name="Nixon K."/>
            <person name="Nusskern D.R."/>
            <person name="Pacleb J.M."/>
            <person name="Palazzolo M."/>
            <person name="Pittman G.S."/>
            <person name="Pan S."/>
            <person name="Pollard J."/>
            <person name="Puri V."/>
            <person name="Reese M.G."/>
            <person name="Reinert K."/>
            <person name="Remington K."/>
            <person name="Saunders R.D.C."/>
            <person name="Scheeler F."/>
            <person name="Shen H."/>
            <person name="Shue B.C."/>
            <person name="Siden-Kiamos I."/>
            <person name="Simpson M."/>
            <person name="Skupski M.P."/>
            <person name="Smith T.J."/>
            <person name="Spier E."/>
            <person name="Spradling A.C."/>
            <person name="Stapleton M."/>
            <person name="Strong R."/>
            <person name="Sun E."/>
            <person name="Svirskas R."/>
            <person name="Tector C."/>
            <person name="Turner R."/>
            <person name="Venter E."/>
            <person name="Wang A.H."/>
            <person name="Wang X."/>
            <person name="Wang Z.-Y."/>
            <person name="Wassarman D.A."/>
            <person name="Weinstock G.M."/>
            <person name="Weissenbach J."/>
            <person name="Williams S.M."/>
            <person name="Woodage T."/>
            <person name="Worley K.C."/>
            <person name="Wu D."/>
            <person name="Yang S."/>
            <person name="Yao Q.A."/>
            <person name="Ye J."/>
            <person name="Yeh R.-F."/>
            <person name="Zaveri J.S."/>
            <person name="Zhan M."/>
            <person name="Zhang G."/>
            <person name="Zhao Q."/>
            <person name="Zheng L."/>
            <person name="Zheng X.H."/>
            <person name="Zhong F.N."/>
            <person name="Zhong W."/>
            <person name="Zhou X."/>
            <person name="Zhu S.C."/>
            <person name="Zhu X."/>
            <person name="Smith H.O."/>
            <person name="Gibbs R.A."/>
            <person name="Myers E.W."/>
            <person name="Rubin G.M."/>
            <person name="Venter J.C."/>
        </authorList>
    </citation>
    <scope>NUCLEOTIDE SEQUENCE [LARGE SCALE GENOMIC DNA]</scope>
    <source>
        <strain>Berkeley</strain>
    </source>
</reference>
<reference key="2">
    <citation type="journal article" date="2002" name="Genome Biol.">
        <title>Annotation of the Drosophila melanogaster euchromatic genome: a systematic review.</title>
        <authorList>
            <person name="Misra S."/>
            <person name="Crosby M.A."/>
            <person name="Mungall C.J."/>
            <person name="Matthews B.B."/>
            <person name="Campbell K.S."/>
            <person name="Hradecky P."/>
            <person name="Huang Y."/>
            <person name="Kaminker J.S."/>
            <person name="Millburn G.H."/>
            <person name="Prochnik S.E."/>
            <person name="Smith C.D."/>
            <person name="Tupy J.L."/>
            <person name="Whitfield E.J."/>
            <person name="Bayraktaroglu L."/>
            <person name="Berman B.P."/>
            <person name="Bettencourt B.R."/>
            <person name="Celniker S.E."/>
            <person name="de Grey A.D.N.J."/>
            <person name="Drysdale R.A."/>
            <person name="Harris N.L."/>
            <person name="Richter J."/>
            <person name="Russo S."/>
            <person name="Schroeder A.J."/>
            <person name="Shu S.Q."/>
            <person name="Stapleton M."/>
            <person name="Yamada C."/>
            <person name="Ashburner M."/>
            <person name="Gelbart W.M."/>
            <person name="Rubin G.M."/>
            <person name="Lewis S.E."/>
        </authorList>
    </citation>
    <scope>GENOME REANNOTATION</scope>
    <source>
        <strain>Berkeley</strain>
    </source>
</reference>
<reference key="3">
    <citation type="journal article" date="2002" name="Genome Biol.">
        <title>A Drosophila full-length cDNA resource.</title>
        <authorList>
            <person name="Stapleton M."/>
            <person name="Carlson J.W."/>
            <person name="Brokstein P."/>
            <person name="Yu C."/>
            <person name="Champe M."/>
            <person name="George R.A."/>
            <person name="Guarin H."/>
            <person name="Kronmiller B."/>
            <person name="Pacleb J.M."/>
            <person name="Park S."/>
            <person name="Wan K.H."/>
            <person name="Rubin G.M."/>
            <person name="Celniker S.E."/>
        </authorList>
    </citation>
    <scope>NUCLEOTIDE SEQUENCE [LARGE SCALE MRNA] (ISOFORM A)</scope>
    <source>
        <strain>Berkeley</strain>
        <tissue>Head</tissue>
    </source>
</reference>
<reference key="4">
    <citation type="submission" date="2006-08" db="EMBL/GenBank/DDBJ databases">
        <authorList>
            <person name="Celniker S."/>
            <person name="Carlson J."/>
            <person name="Wan K."/>
            <person name="Frise E."/>
            <person name="Hoskins R."/>
            <person name="Park S."/>
            <person name="Svirskas R."/>
            <person name="Rubin G."/>
        </authorList>
    </citation>
    <scope>NUCLEOTIDE SEQUENCE [LARGE SCALE MRNA] (ISOFORM A)</scope>
    <source>
        <strain>Berkeley</strain>
        <tissue>Head</tissue>
    </source>
</reference>
<reference key="5">
    <citation type="journal article" date="2016" name="Nature">
        <title>m(6)A modulates neuronal functions and sex determination in Drosophila.</title>
        <authorList>
            <person name="Lence T."/>
            <person name="Akhtar J."/>
            <person name="Bayer M."/>
            <person name="Schmid K."/>
            <person name="Spindler L."/>
            <person name="Ho C.H."/>
            <person name="Kreim N."/>
            <person name="Andrade-Navarro M.A."/>
            <person name="Poeck B."/>
            <person name="Helm M."/>
            <person name="Roignant J.Y."/>
        </authorList>
    </citation>
    <scope>FUNCTION</scope>
    <scope>SUBCELLULAR LOCATION</scope>
    <scope>DISRUPTION PHENOTYPE</scope>
</reference>
<reference key="6">
    <citation type="journal article" date="2016" name="Nature">
        <title>m(6)A potentiates Sxl alternative pre-mRNA splicing for robust Drosophila sex determination.</title>
        <authorList>
            <person name="Haussmann I.U."/>
            <person name="Bodi Z."/>
            <person name="Sanchez-Moran E."/>
            <person name="Mongan N.P."/>
            <person name="Archer N."/>
            <person name="Fray R.G."/>
            <person name="Soller M."/>
        </authorList>
    </citation>
    <scope>FUNCTION</scope>
    <scope>SUBCELLULAR LOCATION</scope>
    <scope>DISRUPTION PHENOTYPE</scope>
</reference>
<reference key="7">
    <citation type="journal article" date="2017" name="Nat. Commun.">
        <title>The m6A pathway facilitates sex determination in Drosophila.</title>
        <authorList>
            <person name="Kan L."/>
            <person name="Grozhik A.V."/>
            <person name="Vedanayagam J."/>
            <person name="Patil D.P."/>
            <person name="Pang N."/>
            <person name="Lim K.S."/>
            <person name="Huang Y.C."/>
            <person name="Joseph B."/>
            <person name="Lin C.J."/>
            <person name="Despic V."/>
            <person name="Guo J."/>
            <person name="Yan D."/>
            <person name="Kondo S."/>
            <person name="Deng W.M."/>
            <person name="Dedon P.C."/>
            <person name="Jaffrey S.R."/>
            <person name="Lai E.C."/>
        </authorList>
    </citation>
    <scope>FUNCTION</scope>
    <scope>SUBCELLULAR LOCATION</scope>
    <scope>DISRUPTION PHENOTYPE</scope>
</reference>
<dbReference type="EMBL" id="AE014296">
    <property type="protein sequence ID" value="AAF47768.2"/>
    <property type="molecule type" value="Genomic_DNA"/>
</dbReference>
<dbReference type="EMBL" id="AE014296">
    <property type="protein sequence ID" value="AAN11564.1"/>
    <property type="molecule type" value="Genomic_DNA"/>
</dbReference>
<dbReference type="EMBL" id="AF145594">
    <property type="protein sequence ID" value="AAD38569.1"/>
    <property type="molecule type" value="mRNA"/>
</dbReference>
<dbReference type="EMBL" id="BT001450">
    <property type="protein sequence ID" value="AAN71205.1"/>
    <property type="status" value="ALT_SEQ"/>
    <property type="molecule type" value="mRNA"/>
</dbReference>
<dbReference type="EMBL" id="BT150336">
    <property type="protein sequence ID" value="AGW25618.1"/>
    <property type="molecule type" value="mRNA"/>
</dbReference>
<dbReference type="RefSeq" id="NP_647811.2">
    <molecule id="Q9VZQ1-1"/>
    <property type="nucleotide sequence ID" value="NM_139554.4"/>
</dbReference>
<dbReference type="RefSeq" id="NP_728876.1">
    <molecule id="Q9VZQ1-2"/>
    <property type="nucleotide sequence ID" value="NM_168029.2"/>
</dbReference>
<dbReference type="SMR" id="Q9VZQ1"/>
<dbReference type="FunCoup" id="Q9VZQ1">
    <property type="interactions" value="671"/>
</dbReference>
<dbReference type="IntAct" id="Q9VZQ1">
    <property type="interactions" value="6"/>
</dbReference>
<dbReference type="STRING" id="7227.FBpp0072940"/>
<dbReference type="PaxDb" id="7227-FBpp0072940"/>
<dbReference type="EnsemblMetazoa" id="FBtr0073078">
    <molecule id="Q9VZQ1-1"/>
    <property type="protein sequence ID" value="FBpp0072940"/>
    <property type="gene ID" value="FBgn0027616"/>
</dbReference>
<dbReference type="EnsemblMetazoa" id="FBtr0073079">
    <molecule id="Q9VZQ1-2"/>
    <property type="protein sequence ID" value="FBpp0072941"/>
    <property type="gene ID" value="FBgn0027616"/>
</dbReference>
<dbReference type="GeneID" id="38420"/>
<dbReference type="KEGG" id="dme:Dmel_CG12076"/>
<dbReference type="UCSC" id="CG12076-RA">
    <molecule id="Q9VZQ1-1"/>
    <property type="organism name" value="d. melanogaster"/>
</dbReference>
<dbReference type="UCSC" id="CG12076-RB">
    <property type="organism name" value="d. melanogaster"/>
</dbReference>
<dbReference type="AGR" id="FB:FBgn0027616"/>
<dbReference type="CTD" id="91746"/>
<dbReference type="FlyBase" id="FBgn0027616">
    <property type="gene designation" value="Ythdc1"/>
</dbReference>
<dbReference type="VEuPathDB" id="VectorBase:FBgn0027616"/>
<dbReference type="eggNOG" id="KOG1902">
    <property type="taxonomic scope" value="Eukaryota"/>
</dbReference>
<dbReference type="GeneTree" id="ENSGT00940000155803"/>
<dbReference type="HOGENOM" id="CLU_388961_0_0_1"/>
<dbReference type="InParanoid" id="Q9VZQ1"/>
<dbReference type="OMA" id="TLPMREM"/>
<dbReference type="OrthoDB" id="5842105at2759"/>
<dbReference type="PhylomeDB" id="Q9VZQ1"/>
<dbReference type="BioGRID-ORCS" id="38420">
    <property type="hits" value="1 hit in 1 CRISPR screen"/>
</dbReference>
<dbReference type="GenomeRNAi" id="38420"/>
<dbReference type="PRO" id="PR:Q9VZQ1"/>
<dbReference type="Proteomes" id="UP000000803">
    <property type="component" value="Chromosome 3L"/>
</dbReference>
<dbReference type="Bgee" id="FBgn0027616">
    <property type="expression patterns" value="Expressed in outer photoreceptor cell (Drosophila) in insect head and 272 other cell types or tissues"/>
</dbReference>
<dbReference type="ExpressionAtlas" id="Q9VZQ1">
    <property type="expression patterns" value="baseline and differential"/>
</dbReference>
<dbReference type="GO" id="GO:0005654">
    <property type="term" value="C:nucleoplasm"/>
    <property type="evidence" value="ECO:0000318"/>
    <property type="project" value="GO_Central"/>
</dbReference>
<dbReference type="GO" id="GO:0005634">
    <property type="term" value="C:nucleus"/>
    <property type="evidence" value="ECO:0000314"/>
    <property type="project" value="FlyBase"/>
</dbReference>
<dbReference type="GO" id="GO:0003729">
    <property type="term" value="F:mRNA binding"/>
    <property type="evidence" value="ECO:0000314"/>
    <property type="project" value="FlyBase"/>
</dbReference>
<dbReference type="GO" id="GO:1990247">
    <property type="term" value="F:N6-methyladenosine-containing RNA reader activity"/>
    <property type="evidence" value="ECO:0000314"/>
    <property type="project" value="FlyBase"/>
</dbReference>
<dbReference type="GO" id="GO:0036002">
    <property type="term" value="F:pre-mRNA binding"/>
    <property type="evidence" value="ECO:0000314"/>
    <property type="project" value="FlyBase"/>
</dbReference>
<dbReference type="GO" id="GO:0030154">
    <property type="term" value="P:cell differentiation"/>
    <property type="evidence" value="ECO:0007669"/>
    <property type="project" value="UniProtKB-KW"/>
</dbReference>
<dbReference type="GO" id="GO:0000398">
    <property type="term" value="P:mRNA splicing, via spliceosome"/>
    <property type="evidence" value="ECO:0000318"/>
    <property type="project" value="GO_Central"/>
</dbReference>
<dbReference type="GO" id="GO:0000381">
    <property type="term" value="P:regulation of alternative mRNA splicing, via spliceosome"/>
    <property type="evidence" value="ECO:0000314"/>
    <property type="project" value="FlyBase"/>
</dbReference>
<dbReference type="GO" id="GO:0007530">
    <property type="term" value="P:sex determination"/>
    <property type="evidence" value="ECO:0000316"/>
    <property type="project" value="FlyBase"/>
</dbReference>
<dbReference type="GO" id="GO:0007548">
    <property type="term" value="P:sex differentiation"/>
    <property type="evidence" value="ECO:0007669"/>
    <property type="project" value="UniProtKB-KW"/>
</dbReference>
<dbReference type="CDD" id="cd21134">
    <property type="entry name" value="YTH"/>
    <property type="match status" value="1"/>
</dbReference>
<dbReference type="FunFam" id="3.10.590.10:FF:000002">
    <property type="entry name" value="YTH domain-containing protein 1 isoform X1"/>
    <property type="match status" value="1"/>
</dbReference>
<dbReference type="Gene3D" id="3.10.590.10">
    <property type="entry name" value="ph1033 like domains"/>
    <property type="match status" value="1"/>
</dbReference>
<dbReference type="InterPro" id="IPR007275">
    <property type="entry name" value="YTH_domain"/>
</dbReference>
<dbReference type="InterPro" id="IPR045168">
    <property type="entry name" value="YTH_prot"/>
</dbReference>
<dbReference type="PANTHER" id="PTHR12357:SF3">
    <property type="entry name" value="YTH DOMAIN-CONTAINING PROTEIN 1"/>
    <property type="match status" value="1"/>
</dbReference>
<dbReference type="PANTHER" id="PTHR12357">
    <property type="entry name" value="YTH YT521-B HOMOLOGY DOMAIN-CONTAINING"/>
    <property type="match status" value="1"/>
</dbReference>
<dbReference type="Pfam" id="PF04146">
    <property type="entry name" value="YTH"/>
    <property type="match status" value="1"/>
</dbReference>
<dbReference type="PROSITE" id="PS50882">
    <property type="entry name" value="YTH"/>
    <property type="match status" value="1"/>
</dbReference>
<accession>Q9VZQ1</accession>
<accession>Q8IH35</accession>
<accession>Q8IRD2</accession>
<accession>Q9Y172</accession>
<proteinExistence type="evidence at transcript level"/>
<name>YTDC1_DROME</name>
<keyword id="KW-0025">Alternative splicing</keyword>
<keyword id="KW-0221">Differentiation</keyword>
<keyword id="KW-0507">mRNA processing</keyword>
<keyword id="KW-0508">mRNA splicing</keyword>
<keyword id="KW-0539">Nucleus</keyword>
<keyword id="KW-1185">Reference proteome</keyword>
<keyword id="KW-0726">Sexual differentiation</keyword>
<gene>
    <name evidence="11" type="primary">Ythdc1</name>
    <name evidence="11" type="ORF">CG12076</name>
</gene>